<feature type="chain" id="PRO_0000202389" description="UPF0162 protein PD_0709">
    <location>
        <begin position="1"/>
        <end position="281"/>
    </location>
</feature>
<feature type="repeat" description="TPR 1">
    <location>
        <begin position="193"/>
        <end position="226"/>
    </location>
</feature>
<feature type="repeat" description="TPR 2">
    <location>
        <begin position="227"/>
        <end position="260"/>
    </location>
</feature>
<name>Y709_XYLFT</name>
<protein>
    <recommendedName>
        <fullName>UPF0162 protein PD_0709</fullName>
    </recommendedName>
</protein>
<reference key="1">
    <citation type="journal article" date="2003" name="J. Bacteriol.">
        <title>Comparative analyses of the complete genome sequences of Pierce's disease and citrus variegated chlorosis strains of Xylella fastidiosa.</title>
        <authorList>
            <person name="Van Sluys M.A."/>
            <person name="de Oliveira M.C."/>
            <person name="Monteiro-Vitorello C.B."/>
            <person name="Miyaki C.Y."/>
            <person name="Furlan L.R."/>
            <person name="Camargo L.E.A."/>
            <person name="da Silva A.C.R."/>
            <person name="Moon D.H."/>
            <person name="Takita M.A."/>
            <person name="Lemos E.G.M."/>
            <person name="Machado M.A."/>
            <person name="Ferro M.I.T."/>
            <person name="da Silva F.R."/>
            <person name="Goldman M.H.S."/>
            <person name="Goldman G.H."/>
            <person name="Lemos M.V.F."/>
            <person name="El-Dorry H."/>
            <person name="Tsai S.M."/>
            <person name="Carrer H."/>
            <person name="Carraro D.M."/>
            <person name="de Oliveira R.C."/>
            <person name="Nunes L.R."/>
            <person name="Siqueira W.J."/>
            <person name="Coutinho L.L."/>
            <person name="Kimura E.T."/>
            <person name="Ferro E.S."/>
            <person name="Harakava R."/>
            <person name="Kuramae E.E."/>
            <person name="Marino C.L."/>
            <person name="Giglioti E."/>
            <person name="Abreu I.L."/>
            <person name="Alves L.M.C."/>
            <person name="do Amaral A.M."/>
            <person name="Baia G.S."/>
            <person name="Blanco S.R."/>
            <person name="Brito M.S."/>
            <person name="Cannavan F.S."/>
            <person name="Celestino A.V."/>
            <person name="da Cunha A.F."/>
            <person name="Fenille R.C."/>
            <person name="Ferro J.A."/>
            <person name="Formighieri E.F."/>
            <person name="Kishi L.T."/>
            <person name="Leoni S.G."/>
            <person name="Oliveira A.R."/>
            <person name="Rosa V.E. Jr."/>
            <person name="Sassaki F.T."/>
            <person name="Sena J.A.D."/>
            <person name="de Souza A.A."/>
            <person name="Truffi D."/>
            <person name="Tsukumo F."/>
            <person name="Yanai G.M."/>
            <person name="Zaros L.G."/>
            <person name="Civerolo E.L."/>
            <person name="Simpson A.J.G."/>
            <person name="Almeida N.F. Jr."/>
            <person name="Setubal J.C."/>
            <person name="Kitajima J.P."/>
        </authorList>
    </citation>
    <scope>NUCLEOTIDE SEQUENCE [LARGE SCALE GENOMIC DNA]</scope>
    <source>
        <strain>Temecula1 / ATCC 700964</strain>
    </source>
</reference>
<evidence type="ECO:0000305" key="1"/>
<accession>Q87DH6</accession>
<gene>
    <name type="ordered locus">PD_0709</name>
</gene>
<dbReference type="EMBL" id="AE009442">
    <property type="protein sequence ID" value="AAO28578.1"/>
    <property type="status" value="ALT_INIT"/>
    <property type="molecule type" value="Genomic_DNA"/>
</dbReference>
<dbReference type="RefSeq" id="WP_004089024.1">
    <property type="nucleotide sequence ID" value="NC_004556.1"/>
</dbReference>
<dbReference type="SMR" id="Q87DH6"/>
<dbReference type="KEGG" id="xft:PD_0709"/>
<dbReference type="HOGENOM" id="CLU_063810_1_0_6"/>
<dbReference type="Proteomes" id="UP000002516">
    <property type="component" value="Chromosome"/>
</dbReference>
<dbReference type="Gene3D" id="1.25.40.10">
    <property type="entry name" value="Tetratricopeptide repeat domain"/>
    <property type="match status" value="1"/>
</dbReference>
<dbReference type="InterPro" id="IPR032698">
    <property type="entry name" value="SirB1_N"/>
</dbReference>
<dbReference type="InterPro" id="IPR011990">
    <property type="entry name" value="TPR-like_helical_dom_sf"/>
</dbReference>
<dbReference type="InterPro" id="IPR019734">
    <property type="entry name" value="TPR_rpt"/>
</dbReference>
<dbReference type="PANTHER" id="PTHR31350:SF21">
    <property type="entry name" value="F-BOX ONLY PROTEIN 21"/>
    <property type="match status" value="1"/>
</dbReference>
<dbReference type="PANTHER" id="PTHR31350">
    <property type="entry name" value="SI:DKEY-261L7.2"/>
    <property type="match status" value="1"/>
</dbReference>
<dbReference type="Pfam" id="PF13371">
    <property type="entry name" value="TPR_9"/>
    <property type="match status" value="1"/>
</dbReference>
<dbReference type="Pfam" id="PF13369">
    <property type="entry name" value="Transglut_core2"/>
    <property type="match status" value="1"/>
</dbReference>
<dbReference type="SMART" id="SM00028">
    <property type="entry name" value="TPR"/>
    <property type="match status" value="2"/>
</dbReference>
<dbReference type="SUPFAM" id="SSF48452">
    <property type="entry name" value="TPR-like"/>
    <property type="match status" value="1"/>
</dbReference>
<dbReference type="PROSITE" id="PS50005">
    <property type="entry name" value="TPR"/>
    <property type="match status" value="2"/>
</dbReference>
<dbReference type="PROSITE" id="PS50293">
    <property type="entry name" value="TPR_REGION"/>
    <property type="match status" value="1"/>
</dbReference>
<sequence length="281" mass="32146">MVEQLLLPLWNNLATVDDETLPLMSTALLIARDEYPDLDANLYDTLVQSYVEYLRSEVEEISLWPLKMAAVNRYLFQKLGYSGNHDEYYDPRNSYLNQVFERRLGNPISLAVIQIEVARRLGIPLDGVSFPGHFLVRLPVDDGILVMDPFNGGRPLDAEELRERARPHLGGEAPDDRALAQILNPAPHRTILVRILRNLHSVYANTDRWDRAARCADRILKLVPNQPEALRDRGLAYLQLGHRSGALNDLKRYLQLYPSTHNVDMVRGHLVDLSNERIQTH</sequence>
<comment type="similarity">
    <text evidence="1">Belongs to the UPF0162 family.</text>
</comment>
<comment type="sequence caution" evidence="1">
    <conflict type="erroneous initiation">
        <sequence resource="EMBL-CDS" id="AAO28578"/>
    </conflict>
    <text>Extended N-terminus.</text>
</comment>
<proteinExistence type="inferred from homology"/>
<organism>
    <name type="scientific">Xylella fastidiosa (strain Temecula1 / ATCC 700964)</name>
    <dbReference type="NCBI Taxonomy" id="183190"/>
    <lineage>
        <taxon>Bacteria</taxon>
        <taxon>Pseudomonadati</taxon>
        <taxon>Pseudomonadota</taxon>
        <taxon>Gammaproteobacteria</taxon>
        <taxon>Lysobacterales</taxon>
        <taxon>Lysobacteraceae</taxon>
        <taxon>Xylella</taxon>
    </lineage>
</organism>
<keyword id="KW-1185">Reference proteome</keyword>
<keyword id="KW-0677">Repeat</keyword>
<keyword id="KW-0802">TPR repeat</keyword>